<evidence type="ECO:0000250" key="1">
    <source>
        <dbReference type="UniProtKB" id="O75817"/>
    </source>
</evidence>
<evidence type="ECO:0000256" key="2">
    <source>
        <dbReference type="SAM" id="MobiDB-lite"/>
    </source>
</evidence>
<evidence type="ECO:0000269" key="3">
    <source>
    </source>
</evidence>
<evidence type="ECO:0000305" key="4"/>
<evidence type="ECO:0000312" key="5">
    <source>
        <dbReference type="EMBL" id="AAZ52504.1"/>
    </source>
</evidence>
<evidence type="ECO:0000312" key="6">
    <source>
        <dbReference type="EMBL" id="ACN62436.1"/>
    </source>
</evidence>
<evidence type="ECO:0000312" key="7">
    <source>
        <dbReference type="FlyBase" id="FBgn0066304"/>
    </source>
</evidence>
<reference evidence="5" key="1">
    <citation type="journal article" date="2000" name="Science">
        <title>The genome sequence of Drosophila melanogaster.</title>
        <authorList>
            <person name="Adams M.D."/>
            <person name="Celniker S.E."/>
            <person name="Holt R.A."/>
            <person name="Evans C.A."/>
            <person name="Gocayne J.D."/>
            <person name="Amanatides P.G."/>
            <person name="Scherer S.E."/>
            <person name="Li P.W."/>
            <person name="Hoskins R.A."/>
            <person name="Galle R.F."/>
            <person name="George R.A."/>
            <person name="Lewis S.E."/>
            <person name="Richards S."/>
            <person name="Ashburner M."/>
            <person name="Henderson S.N."/>
            <person name="Sutton G.G."/>
            <person name="Wortman J.R."/>
            <person name="Yandell M.D."/>
            <person name="Zhang Q."/>
            <person name="Chen L.X."/>
            <person name="Brandon R.C."/>
            <person name="Rogers Y.-H.C."/>
            <person name="Blazej R.G."/>
            <person name="Champe M."/>
            <person name="Pfeiffer B.D."/>
            <person name="Wan K.H."/>
            <person name="Doyle C."/>
            <person name="Baxter E.G."/>
            <person name="Helt G."/>
            <person name="Nelson C.R."/>
            <person name="Miklos G.L.G."/>
            <person name="Abril J.F."/>
            <person name="Agbayani A."/>
            <person name="An H.-J."/>
            <person name="Andrews-Pfannkoch C."/>
            <person name="Baldwin D."/>
            <person name="Ballew R.M."/>
            <person name="Basu A."/>
            <person name="Baxendale J."/>
            <person name="Bayraktaroglu L."/>
            <person name="Beasley E.M."/>
            <person name="Beeson K.Y."/>
            <person name="Benos P.V."/>
            <person name="Berman B.P."/>
            <person name="Bhandari D."/>
            <person name="Bolshakov S."/>
            <person name="Borkova D."/>
            <person name="Botchan M.R."/>
            <person name="Bouck J."/>
            <person name="Brokstein P."/>
            <person name="Brottier P."/>
            <person name="Burtis K.C."/>
            <person name="Busam D.A."/>
            <person name="Butler H."/>
            <person name="Cadieu E."/>
            <person name="Center A."/>
            <person name="Chandra I."/>
            <person name="Cherry J.M."/>
            <person name="Cawley S."/>
            <person name="Dahlke C."/>
            <person name="Davenport L.B."/>
            <person name="Davies P."/>
            <person name="de Pablos B."/>
            <person name="Delcher A."/>
            <person name="Deng Z."/>
            <person name="Mays A.D."/>
            <person name="Dew I."/>
            <person name="Dietz S.M."/>
            <person name="Dodson K."/>
            <person name="Doup L.E."/>
            <person name="Downes M."/>
            <person name="Dugan-Rocha S."/>
            <person name="Dunkov B.C."/>
            <person name="Dunn P."/>
            <person name="Durbin K.J."/>
            <person name="Evangelista C.C."/>
            <person name="Ferraz C."/>
            <person name="Ferriera S."/>
            <person name="Fleischmann W."/>
            <person name="Fosler C."/>
            <person name="Gabrielian A.E."/>
            <person name="Garg N.S."/>
            <person name="Gelbart W.M."/>
            <person name="Glasser K."/>
            <person name="Glodek A."/>
            <person name="Gong F."/>
            <person name="Gorrell J.H."/>
            <person name="Gu Z."/>
            <person name="Guan P."/>
            <person name="Harris M."/>
            <person name="Harris N.L."/>
            <person name="Harvey D.A."/>
            <person name="Heiman T.J."/>
            <person name="Hernandez J.R."/>
            <person name="Houck J."/>
            <person name="Hostin D."/>
            <person name="Houston K.A."/>
            <person name="Howland T.J."/>
            <person name="Wei M.-H."/>
            <person name="Ibegwam C."/>
            <person name="Jalali M."/>
            <person name="Kalush F."/>
            <person name="Karpen G.H."/>
            <person name="Ke Z."/>
            <person name="Kennison J.A."/>
            <person name="Ketchum K.A."/>
            <person name="Kimmel B.E."/>
            <person name="Kodira C.D."/>
            <person name="Kraft C.L."/>
            <person name="Kravitz S."/>
            <person name="Kulp D."/>
            <person name="Lai Z."/>
            <person name="Lasko P."/>
            <person name="Lei Y."/>
            <person name="Levitsky A.A."/>
            <person name="Li J.H."/>
            <person name="Li Z."/>
            <person name="Liang Y."/>
            <person name="Lin X."/>
            <person name="Liu X."/>
            <person name="Mattei B."/>
            <person name="McIntosh T.C."/>
            <person name="McLeod M.P."/>
            <person name="McPherson D."/>
            <person name="Merkulov G."/>
            <person name="Milshina N.V."/>
            <person name="Mobarry C."/>
            <person name="Morris J."/>
            <person name="Moshrefi A."/>
            <person name="Mount S.M."/>
            <person name="Moy M."/>
            <person name="Murphy B."/>
            <person name="Murphy L."/>
            <person name="Muzny D.M."/>
            <person name="Nelson D.L."/>
            <person name="Nelson D.R."/>
            <person name="Nelson K.A."/>
            <person name="Nixon K."/>
            <person name="Nusskern D.R."/>
            <person name="Pacleb J.M."/>
            <person name="Palazzolo M."/>
            <person name="Pittman G.S."/>
            <person name="Pan S."/>
            <person name="Pollard J."/>
            <person name="Puri V."/>
            <person name="Reese M.G."/>
            <person name="Reinert K."/>
            <person name="Remington K."/>
            <person name="Saunders R.D.C."/>
            <person name="Scheeler F."/>
            <person name="Shen H."/>
            <person name="Shue B.C."/>
            <person name="Siden-Kiamos I."/>
            <person name="Simpson M."/>
            <person name="Skupski M.P."/>
            <person name="Smith T.J."/>
            <person name="Spier E."/>
            <person name="Spradling A.C."/>
            <person name="Stapleton M."/>
            <person name="Strong R."/>
            <person name="Sun E."/>
            <person name="Svirskas R."/>
            <person name="Tector C."/>
            <person name="Turner R."/>
            <person name="Venter E."/>
            <person name="Wang A.H."/>
            <person name="Wang X."/>
            <person name="Wang Z.-Y."/>
            <person name="Wassarman D.A."/>
            <person name="Weinstock G.M."/>
            <person name="Weissenbach J."/>
            <person name="Williams S.M."/>
            <person name="Woodage T."/>
            <person name="Worley K.C."/>
            <person name="Wu D."/>
            <person name="Yang S."/>
            <person name="Yao Q.A."/>
            <person name="Ye J."/>
            <person name="Yeh R.-F."/>
            <person name="Zaveri J.S."/>
            <person name="Zhan M."/>
            <person name="Zhang G."/>
            <person name="Zhao Q."/>
            <person name="Zheng L."/>
            <person name="Zheng X.H."/>
            <person name="Zhong F.N."/>
            <person name="Zhong W."/>
            <person name="Zhou X."/>
            <person name="Zhu S.C."/>
            <person name="Zhu X."/>
            <person name="Smith H.O."/>
            <person name="Gibbs R.A."/>
            <person name="Myers E.W."/>
            <person name="Rubin G.M."/>
            <person name="Venter J.C."/>
        </authorList>
    </citation>
    <scope>NUCLEOTIDE SEQUENCE [LARGE SCALE GENOMIC DNA]</scope>
    <source>
        <strain>Berkeley</strain>
    </source>
</reference>
<reference evidence="5" key="2">
    <citation type="journal article" date="2002" name="Genome Biol.">
        <title>Annotation of the Drosophila melanogaster euchromatic genome: a systematic review.</title>
        <authorList>
            <person name="Misra S."/>
            <person name="Crosby M.A."/>
            <person name="Mungall C.J."/>
            <person name="Matthews B.B."/>
            <person name="Campbell K.S."/>
            <person name="Hradecky P."/>
            <person name="Huang Y."/>
            <person name="Kaminker J.S."/>
            <person name="Millburn G.H."/>
            <person name="Prochnik S.E."/>
            <person name="Smith C.D."/>
            <person name="Tupy J.L."/>
            <person name="Whitfield E.J."/>
            <person name="Bayraktaroglu L."/>
            <person name="Berman B.P."/>
            <person name="Bettencourt B.R."/>
            <person name="Celniker S.E."/>
            <person name="de Grey A.D.N.J."/>
            <person name="Drysdale R.A."/>
            <person name="Harris N.L."/>
            <person name="Richter J."/>
            <person name="Russo S."/>
            <person name="Schroeder A.J."/>
            <person name="Shu S.Q."/>
            <person name="Stapleton M."/>
            <person name="Yamada C."/>
            <person name="Ashburner M."/>
            <person name="Gelbart W.M."/>
            <person name="Rubin G.M."/>
            <person name="Lewis S.E."/>
        </authorList>
    </citation>
    <scope>GENOME REANNOTATION</scope>
    <source>
        <strain>Berkeley</strain>
    </source>
</reference>
<reference evidence="6" key="3">
    <citation type="submission" date="2009-03" db="EMBL/GenBank/DDBJ databases">
        <authorList>
            <person name="Carlson J."/>
            <person name="Booth B."/>
            <person name="Frise E."/>
            <person name="Park S."/>
            <person name="Wan K."/>
            <person name="Yu C."/>
            <person name="Celniker S."/>
        </authorList>
    </citation>
    <scope>NUCLEOTIDE SEQUENCE [LARGE SCALE MRNA]</scope>
    <source>
        <strain>Berkeley</strain>
        <tissue>Embryo</tissue>
    </source>
</reference>
<reference evidence="4" key="4">
    <citation type="journal article" date="2004" name="Biochem. Biophys. Res. Commun.">
        <title>Rpp20 interacts with SMN and is re-distributed into SMN granules in response to stress.</title>
        <authorList>
            <person name="Hua Y."/>
            <person name="Zhou J."/>
        </authorList>
    </citation>
    <scope>INTERACTION WITH SMN</scope>
</reference>
<gene>
    <name evidence="7" type="primary">Rpp20</name>
    <name evidence="7" type="ORF">CG33931</name>
</gene>
<proteinExistence type="evidence at protein level"/>
<comment type="function">
    <text evidence="1">Component of ribonuclease P, a protein complex that generates mature tRNA molecules by cleaving their 5'-ends. Also a component of RNase MRP complex, which cleaves pre-rRNA sequences (By similarity).</text>
</comment>
<comment type="subunit">
    <text evidence="3">Interacts with Smn.</text>
</comment>
<comment type="interaction">
    <interactant intactId="EBI-1151669">
        <id>Q2MGL3</id>
    </interactant>
    <interactant intactId="EBI-185315">
        <id>Q9VV74</id>
        <label>Smn</label>
    </interactant>
    <organismsDiffer>false</organismsDiffer>
    <experiments>3</experiments>
</comment>
<comment type="subcellular location">
    <subcellularLocation>
        <location evidence="1">Nucleus</location>
        <location evidence="1">Nucleolus</location>
    </subcellularLocation>
    <subcellularLocation>
        <location evidence="1">Cytoplasm</location>
    </subcellularLocation>
    <subcellularLocation>
        <location evidence="1">Cytoplasmic granule</location>
    </subcellularLocation>
</comment>
<comment type="sequence caution" evidence="4">
    <conflict type="erroneous initiation">
        <sequence resource="EMBL-CDS" id="ACN62436"/>
    </conflict>
    <text>Extended N-terminus.</text>
</comment>
<organism>
    <name type="scientific">Drosophila melanogaster</name>
    <name type="common">Fruit fly</name>
    <dbReference type="NCBI Taxonomy" id="7227"/>
    <lineage>
        <taxon>Eukaryota</taxon>
        <taxon>Metazoa</taxon>
        <taxon>Ecdysozoa</taxon>
        <taxon>Arthropoda</taxon>
        <taxon>Hexapoda</taxon>
        <taxon>Insecta</taxon>
        <taxon>Pterygota</taxon>
        <taxon>Neoptera</taxon>
        <taxon>Endopterygota</taxon>
        <taxon>Diptera</taxon>
        <taxon>Brachycera</taxon>
        <taxon>Muscomorpha</taxon>
        <taxon>Ephydroidea</taxon>
        <taxon>Drosophilidae</taxon>
        <taxon>Drosophila</taxon>
        <taxon>Sophophora</taxon>
    </lineage>
</organism>
<protein>
    <recommendedName>
        <fullName evidence="1">Ribonuclease P protein subunit p20</fullName>
        <shortName evidence="1">RNaseP protein p20</shortName>
    </recommendedName>
</protein>
<feature type="chain" id="PRO_0000424383" description="Ribonuclease P protein subunit p20">
    <location>
        <begin position="1"/>
        <end position="167"/>
    </location>
</feature>
<feature type="region of interest" description="Disordered" evidence="2">
    <location>
        <begin position="1"/>
        <end position="36"/>
    </location>
</feature>
<feature type="compositionally biased region" description="Basic residues" evidence="2">
    <location>
        <begin position="12"/>
        <end position="31"/>
    </location>
</feature>
<keyword id="KW-0963">Cytoplasm</keyword>
<keyword id="KW-0539">Nucleus</keyword>
<keyword id="KW-1185">Reference proteome</keyword>
<keyword id="KW-0819">tRNA processing</keyword>
<accession>Q2MGL3</accession>
<accession>C0PUX7</accession>
<dbReference type="EMBL" id="AE014298">
    <property type="protein sequence ID" value="AAZ52504.1"/>
    <property type="molecule type" value="Genomic_DNA"/>
</dbReference>
<dbReference type="EMBL" id="BT072833">
    <property type="protein sequence ID" value="ACN62436.1"/>
    <property type="status" value="ALT_INIT"/>
    <property type="molecule type" value="mRNA"/>
</dbReference>
<dbReference type="RefSeq" id="NP_001027078.1">
    <property type="nucleotide sequence ID" value="NM_001031907.2"/>
</dbReference>
<dbReference type="RefSeq" id="NP_001285462.1">
    <property type="nucleotide sequence ID" value="NM_001298533.1"/>
</dbReference>
<dbReference type="SMR" id="Q2MGL3"/>
<dbReference type="BioGRID" id="533604">
    <property type="interactions" value="4"/>
</dbReference>
<dbReference type="ComplexPortal" id="CPX-2629">
    <property type="entry name" value="Ribonuclease MRP complex"/>
</dbReference>
<dbReference type="ComplexPortal" id="CPX-2637">
    <property type="entry name" value="Nucleolar ribonuclease P complex"/>
</dbReference>
<dbReference type="FunCoup" id="Q2MGL3">
    <property type="interactions" value="918"/>
</dbReference>
<dbReference type="IntAct" id="Q2MGL3">
    <property type="interactions" value="3"/>
</dbReference>
<dbReference type="STRING" id="7227.FBpp0311904"/>
<dbReference type="PaxDb" id="7227-FBpp0099986"/>
<dbReference type="DNASU" id="3772007"/>
<dbReference type="EnsemblMetazoa" id="FBtr0091935">
    <property type="protein sequence ID" value="FBpp0099986"/>
    <property type="gene ID" value="FBgn0066304"/>
</dbReference>
<dbReference type="EnsemblMetazoa" id="FBtr0346040">
    <property type="protein sequence ID" value="FBpp0311904"/>
    <property type="gene ID" value="FBgn0066304"/>
</dbReference>
<dbReference type="GeneID" id="3772007"/>
<dbReference type="KEGG" id="dme:Dmel_CG33931"/>
<dbReference type="UCSC" id="CG33931-RA">
    <property type="organism name" value="d. melanogaster"/>
</dbReference>
<dbReference type="AGR" id="FB:FBgn0066304"/>
<dbReference type="CTD" id="3772007"/>
<dbReference type="FlyBase" id="FBgn0066304">
    <property type="gene designation" value="Rpp20"/>
</dbReference>
<dbReference type="VEuPathDB" id="VectorBase:FBgn0066304"/>
<dbReference type="eggNOG" id="KOG3631">
    <property type="taxonomic scope" value="Eukaryota"/>
</dbReference>
<dbReference type="HOGENOM" id="CLU_130587_1_0_1"/>
<dbReference type="InParanoid" id="Q2MGL3"/>
<dbReference type="OMA" id="LHCMGYS"/>
<dbReference type="OrthoDB" id="416729at2759"/>
<dbReference type="PhylomeDB" id="Q2MGL3"/>
<dbReference type="SignaLink" id="Q2MGL3"/>
<dbReference type="BioGRID-ORCS" id="3772007">
    <property type="hits" value="1 hit in 1 CRISPR screen"/>
</dbReference>
<dbReference type="ChiTaRS" id="Rpp20">
    <property type="organism name" value="fly"/>
</dbReference>
<dbReference type="GenomeRNAi" id="3772007"/>
<dbReference type="PRO" id="PR:Q2MGL3"/>
<dbReference type="Proteomes" id="UP000000803">
    <property type="component" value="Chromosome X"/>
</dbReference>
<dbReference type="Bgee" id="FBgn0066304">
    <property type="expression patterns" value="Expressed in ovary and 9 other cell types or tissues"/>
</dbReference>
<dbReference type="GO" id="GO:0005737">
    <property type="term" value="C:cytoplasm"/>
    <property type="evidence" value="ECO:0000314"/>
    <property type="project" value="FlyBase"/>
</dbReference>
<dbReference type="GO" id="GO:0030681">
    <property type="term" value="C:multimeric ribonuclease P complex"/>
    <property type="evidence" value="ECO:0000250"/>
    <property type="project" value="FlyBase"/>
</dbReference>
<dbReference type="GO" id="GO:0005655">
    <property type="term" value="C:nucleolar ribonuclease P complex"/>
    <property type="evidence" value="ECO:0000250"/>
    <property type="project" value="FlyBase"/>
</dbReference>
<dbReference type="GO" id="GO:0005634">
    <property type="term" value="C:nucleus"/>
    <property type="evidence" value="ECO:0000314"/>
    <property type="project" value="FlyBase"/>
</dbReference>
<dbReference type="GO" id="GO:0000172">
    <property type="term" value="C:ribonuclease MRP complex"/>
    <property type="evidence" value="ECO:0000250"/>
    <property type="project" value="FlyBase"/>
</dbReference>
<dbReference type="GO" id="GO:0004526">
    <property type="term" value="F:ribonuclease P activity"/>
    <property type="evidence" value="ECO:0007669"/>
    <property type="project" value="UniProtKB-EC"/>
</dbReference>
<dbReference type="GO" id="GO:0033204">
    <property type="term" value="F:ribonuclease P RNA binding"/>
    <property type="evidence" value="ECO:0000250"/>
    <property type="project" value="FlyBase"/>
</dbReference>
<dbReference type="GO" id="GO:0006364">
    <property type="term" value="P:rRNA processing"/>
    <property type="evidence" value="ECO:0000250"/>
    <property type="project" value="FlyBase"/>
</dbReference>
<dbReference type="GO" id="GO:0001682">
    <property type="term" value="P:tRNA 5'-leader removal"/>
    <property type="evidence" value="ECO:0000250"/>
    <property type="project" value="FlyBase"/>
</dbReference>
<dbReference type="GO" id="GO:0008033">
    <property type="term" value="P:tRNA processing"/>
    <property type="evidence" value="ECO:0000250"/>
    <property type="project" value="FlyBase"/>
</dbReference>
<dbReference type="FunFam" id="3.30.110.20:FF:000016">
    <property type="entry name" value="Rpp20, isoform B"/>
    <property type="match status" value="1"/>
</dbReference>
<dbReference type="Gene3D" id="3.30.110.20">
    <property type="entry name" value="Alba-like domain"/>
    <property type="match status" value="1"/>
</dbReference>
<dbReference type="InterPro" id="IPR036882">
    <property type="entry name" value="Alba-like_dom_sf"/>
</dbReference>
<dbReference type="InterPro" id="IPR014612">
    <property type="entry name" value="Pop7/Rpp20"/>
</dbReference>
<dbReference type="PANTHER" id="PTHR15314">
    <property type="entry name" value="RIBONUCLEASE P PROTEIN SUBUNIT P20"/>
    <property type="match status" value="1"/>
</dbReference>
<dbReference type="PANTHER" id="PTHR15314:SF1">
    <property type="entry name" value="RIBONUCLEASE P PROTEIN SUBUNIT P20"/>
    <property type="match status" value="1"/>
</dbReference>
<dbReference type="Pfam" id="PF12328">
    <property type="entry name" value="Rpp20"/>
    <property type="match status" value="1"/>
</dbReference>
<dbReference type="SUPFAM" id="SSF82704">
    <property type="entry name" value="AlbA-like"/>
    <property type="match status" value="1"/>
</dbReference>
<sequence>MMGSNYPEHGTKPRSAKYHKQQNHRVVRKQPPRPAVSDRHNIYITSKTDFKAQQRRCEELINSGAHEIFLHCMGFSVTRGLNIALRLVQNSDGALSYAINTSTVQLVDELHPLCDAEDITFRQRNNSALHIKILNNSLFDIAVPQPSQSQTQAQSLGQFRGKAKARQ</sequence>
<name>POP7_DROME</name>